<sequence length="467" mass="52315">MDTAGIRLTPKEIVSKLNEYIVGQNDAKRKVAIALRNRYRRSLLDEESKQEISPKNILMIGPTGVGKTEIARRMAKVVGAPFIKVEATKFTEVGYVGRDVESMVRDLVDVSVRLVKAQKKSLVQDEATAKANEKLVKLLVPSMKKKASQTNNPLESLFGGAIPNFGQNNEDEEEPPTEEIKTKRSEIKRQLEEGKLEKEKVRIKVEQDPGALGMLGTNQNQQMQEMMNQLMPKKKVEREVAVETARKILADSYADELIDQESANQEALELAEQMGIIFIDEIDKVATNNHNSGQDVSRQGVQRDILPILEGSVIQTKYGTVNTEHMLFIGAGAFHVSKPSDLIPELQGRFPIRVELDSLSVEDFVRILTEPKLSLIKQYEALLQTEEVTVNFTDEAITRLAEIAYQVNQDTDNIGARRLHTILEKMLEDLSFEAPSMPNAVVDITPQYVDDKLKSISTNKDLSAFIL</sequence>
<proteinExistence type="inferred from homology"/>
<keyword id="KW-0067">ATP-binding</keyword>
<keyword id="KW-0143">Chaperone</keyword>
<keyword id="KW-0963">Cytoplasm</keyword>
<keyword id="KW-0547">Nucleotide-binding</keyword>
<keyword id="KW-0346">Stress response</keyword>
<comment type="function">
    <text evidence="1">ATPase subunit of a proteasome-like degradation complex; this subunit has chaperone activity. The binding of ATP and its subsequent hydrolysis by HslU are essential for unfolding of protein substrates subsequently hydrolyzed by HslV. HslU recognizes the N-terminal part of its protein substrates and unfolds these before they are guided to HslV for hydrolysis.</text>
</comment>
<comment type="subunit">
    <text evidence="1">A double ring-shaped homohexamer of HslV is capped on each side by a ring-shaped HslU homohexamer. The assembly of the HslU/HslV complex is dependent on binding of ATP.</text>
</comment>
<comment type="subcellular location">
    <subcellularLocation>
        <location evidence="1">Cytoplasm</location>
    </subcellularLocation>
</comment>
<comment type="similarity">
    <text evidence="1">Belongs to the ClpX chaperone family. HslU subfamily.</text>
</comment>
<gene>
    <name evidence="1" type="primary">hslU</name>
    <name type="ordered locus">SaurJH9_1314</name>
</gene>
<name>HSLU_STAA9</name>
<feature type="chain" id="PRO_1000078459" description="ATP-dependent protease ATPase subunit HslU">
    <location>
        <begin position="1"/>
        <end position="467"/>
    </location>
</feature>
<feature type="region of interest" description="Disordered" evidence="2">
    <location>
        <begin position="149"/>
        <end position="192"/>
    </location>
</feature>
<feature type="compositionally biased region" description="Basic and acidic residues" evidence="2">
    <location>
        <begin position="178"/>
        <end position="192"/>
    </location>
</feature>
<feature type="binding site" evidence="1">
    <location>
        <position position="22"/>
    </location>
    <ligand>
        <name>ATP</name>
        <dbReference type="ChEBI" id="CHEBI:30616"/>
    </ligand>
</feature>
<feature type="binding site" evidence="1">
    <location>
        <begin position="64"/>
        <end position="69"/>
    </location>
    <ligand>
        <name>ATP</name>
        <dbReference type="ChEBI" id="CHEBI:30616"/>
    </ligand>
</feature>
<feature type="binding site" evidence="1">
    <location>
        <position position="280"/>
    </location>
    <ligand>
        <name>ATP</name>
        <dbReference type="ChEBI" id="CHEBI:30616"/>
    </ligand>
</feature>
<feature type="binding site" evidence="1">
    <location>
        <position position="345"/>
    </location>
    <ligand>
        <name>ATP</name>
        <dbReference type="ChEBI" id="CHEBI:30616"/>
    </ligand>
</feature>
<feature type="binding site" evidence="1">
    <location>
        <position position="417"/>
    </location>
    <ligand>
        <name>ATP</name>
        <dbReference type="ChEBI" id="CHEBI:30616"/>
    </ligand>
</feature>
<evidence type="ECO:0000255" key="1">
    <source>
        <dbReference type="HAMAP-Rule" id="MF_00249"/>
    </source>
</evidence>
<evidence type="ECO:0000256" key="2">
    <source>
        <dbReference type="SAM" id="MobiDB-lite"/>
    </source>
</evidence>
<reference key="1">
    <citation type="submission" date="2007-05" db="EMBL/GenBank/DDBJ databases">
        <title>Complete sequence of chromosome of Staphylococcus aureus subsp. aureus JH9.</title>
        <authorList>
            <consortium name="US DOE Joint Genome Institute"/>
            <person name="Copeland A."/>
            <person name="Lucas S."/>
            <person name="Lapidus A."/>
            <person name="Barry K."/>
            <person name="Detter J.C."/>
            <person name="Glavina del Rio T."/>
            <person name="Hammon N."/>
            <person name="Israni S."/>
            <person name="Pitluck S."/>
            <person name="Chain P."/>
            <person name="Malfatti S."/>
            <person name="Shin M."/>
            <person name="Vergez L."/>
            <person name="Schmutz J."/>
            <person name="Larimer F."/>
            <person name="Land M."/>
            <person name="Hauser L."/>
            <person name="Kyrpides N."/>
            <person name="Kim E."/>
            <person name="Tomasz A."/>
            <person name="Richardson P."/>
        </authorList>
    </citation>
    <scope>NUCLEOTIDE SEQUENCE [LARGE SCALE GENOMIC DNA]</scope>
    <source>
        <strain>JH9</strain>
    </source>
</reference>
<organism>
    <name type="scientific">Staphylococcus aureus (strain JH9)</name>
    <dbReference type="NCBI Taxonomy" id="359786"/>
    <lineage>
        <taxon>Bacteria</taxon>
        <taxon>Bacillati</taxon>
        <taxon>Bacillota</taxon>
        <taxon>Bacilli</taxon>
        <taxon>Bacillales</taxon>
        <taxon>Staphylococcaceae</taxon>
        <taxon>Staphylococcus</taxon>
    </lineage>
</organism>
<protein>
    <recommendedName>
        <fullName evidence="1">ATP-dependent protease ATPase subunit HslU</fullName>
    </recommendedName>
    <alternativeName>
        <fullName evidence="1">Unfoldase HslU</fullName>
    </alternativeName>
</protein>
<accession>A5ISD8</accession>
<dbReference type="EMBL" id="CP000703">
    <property type="protein sequence ID" value="ABQ49111.1"/>
    <property type="molecule type" value="Genomic_DNA"/>
</dbReference>
<dbReference type="RefSeq" id="WP_000379054.1">
    <property type="nucleotide sequence ID" value="NC_009487.1"/>
</dbReference>
<dbReference type="SMR" id="A5ISD8"/>
<dbReference type="KEGG" id="saj:SaurJH9_1314"/>
<dbReference type="HOGENOM" id="CLU_033123_0_0_9"/>
<dbReference type="GO" id="GO:0009376">
    <property type="term" value="C:HslUV protease complex"/>
    <property type="evidence" value="ECO:0007669"/>
    <property type="project" value="UniProtKB-UniRule"/>
</dbReference>
<dbReference type="GO" id="GO:0005524">
    <property type="term" value="F:ATP binding"/>
    <property type="evidence" value="ECO:0007669"/>
    <property type="project" value="UniProtKB-UniRule"/>
</dbReference>
<dbReference type="GO" id="GO:0016887">
    <property type="term" value="F:ATP hydrolysis activity"/>
    <property type="evidence" value="ECO:0007669"/>
    <property type="project" value="InterPro"/>
</dbReference>
<dbReference type="GO" id="GO:0008233">
    <property type="term" value="F:peptidase activity"/>
    <property type="evidence" value="ECO:0007669"/>
    <property type="project" value="InterPro"/>
</dbReference>
<dbReference type="GO" id="GO:0036402">
    <property type="term" value="F:proteasome-activating activity"/>
    <property type="evidence" value="ECO:0007669"/>
    <property type="project" value="UniProtKB-UniRule"/>
</dbReference>
<dbReference type="GO" id="GO:0043335">
    <property type="term" value="P:protein unfolding"/>
    <property type="evidence" value="ECO:0007669"/>
    <property type="project" value="UniProtKB-UniRule"/>
</dbReference>
<dbReference type="GO" id="GO:0051603">
    <property type="term" value="P:proteolysis involved in protein catabolic process"/>
    <property type="evidence" value="ECO:0007669"/>
    <property type="project" value="TreeGrafter"/>
</dbReference>
<dbReference type="CDD" id="cd19498">
    <property type="entry name" value="RecA-like_HslU"/>
    <property type="match status" value="1"/>
</dbReference>
<dbReference type="FunFam" id="3.40.50.300:FF:000220">
    <property type="entry name" value="ATP-dependent protease ATPase subunit HslU"/>
    <property type="match status" value="1"/>
</dbReference>
<dbReference type="Gene3D" id="1.10.8.60">
    <property type="match status" value="1"/>
</dbReference>
<dbReference type="Gene3D" id="1.10.8.10">
    <property type="entry name" value="DNA helicase RuvA subunit, C-terminal domain"/>
    <property type="match status" value="1"/>
</dbReference>
<dbReference type="Gene3D" id="3.40.50.300">
    <property type="entry name" value="P-loop containing nucleotide triphosphate hydrolases"/>
    <property type="match status" value="2"/>
</dbReference>
<dbReference type="HAMAP" id="MF_00249">
    <property type="entry name" value="HslU"/>
    <property type="match status" value="1"/>
</dbReference>
<dbReference type="InterPro" id="IPR003593">
    <property type="entry name" value="AAA+_ATPase"/>
</dbReference>
<dbReference type="InterPro" id="IPR050052">
    <property type="entry name" value="ATP-dep_Clp_protease_ClpX"/>
</dbReference>
<dbReference type="InterPro" id="IPR003959">
    <property type="entry name" value="ATPase_AAA_core"/>
</dbReference>
<dbReference type="InterPro" id="IPR019489">
    <property type="entry name" value="Clp_ATPase_C"/>
</dbReference>
<dbReference type="InterPro" id="IPR004491">
    <property type="entry name" value="HslU"/>
</dbReference>
<dbReference type="InterPro" id="IPR027417">
    <property type="entry name" value="P-loop_NTPase"/>
</dbReference>
<dbReference type="NCBIfam" id="TIGR00390">
    <property type="entry name" value="hslU"/>
    <property type="match status" value="1"/>
</dbReference>
<dbReference type="NCBIfam" id="NF003544">
    <property type="entry name" value="PRK05201.1"/>
    <property type="match status" value="1"/>
</dbReference>
<dbReference type="PANTHER" id="PTHR48102">
    <property type="entry name" value="ATP-DEPENDENT CLP PROTEASE ATP-BINDING SUBUNIT CLPX-LIKE, MITOCHONDRIAL-RELATED"/>
    <property type="match status" value="1"/>
</dbReference>
<dbReference type="PANTHER" id="PTHR48102:SF3">
    <property type="entry name" value="ATP-DEPENDENT PROTEASE ATPASE SUBUNIT HSLU"/>
    <property type="match status" value="1"/>
</dbReference>
<dbReference type="Pfam" id="PF00004">
    <property type="entry name" value="AAA"/>
    <property type="match status" value="1"/>
</dbReference>
<dbReference type="Pfam" id="PF07724">
    <property type="entry name" value="AAA_2"/>
    <property type="match status" value="1"/>
</dbReference>
<dbReference type="Pfam" id="PF10431">
    <property type="entry name" value="ClpB_D2-small"/>
    <property type="match status" value="1"/>
</dbReference>
<dbReference type="SMART" id="SM00382">
    <property type="entry name" value="AAA"/>
    <property type="match status" value="1"/>
</dbReference>
<dbReference type="SMART" id="SM01086">
    <property type="entry name" value="ClpB_D2-small"/>
    <property type="match status" value="1"/>
</dbReference>
<dbReference type="SUPFAM" id="SSF52540">
    <property type="entry name" value="P-loop containing nucleoside triphosphate hydrolases"/>
    <property type="match status" value="1"/>
</dbReference>